<keyword id="KW-0963">Cytoplasm</keyword>
<keyword id="KW-0620">Polyamine biosynthesis</keyword>
<keyword id="KW-0745">Spermidine biosynthesis</keyword>
<keyword id="KW-0808">Transferase</keyword>
<gene>
    <name evidence="1" type="primary">speE</name>
    <name type="ordered locus">SCH_0166</name>
</gene>
<comment type="function">
    <text evidence="1">Catalyzes the irreversible transfer of a propylamine group from the amino donor S-adenosylmethioninamine (decarboxy-AdoMet) to putrescine (1,4-diaminobutane) to yield spermidine.</text>
</comment>
<comment type="catalytic activity">
    <reaction evidence="1">
        <text>S-adenosyl 3-(methylsulfanyl)propylamine + putrescine = S-methyl-5'-thioadenosine + spermidine + H(+)</text>
        <dbReference type="Rhea" id="RHEA:12721"/>
        <dbReference type="ChEBI" id="CHEBI:15378"/>
        <dbReference type="ChEBI" id="CHEBI:17509"/>
        <dbReference type="ChEBI" id="CHEBI:57443"/>
        <dbReference type="ChEBI" id="CHEBI:57834"/>
        <dbReference type="ChEBI" id="CHEBI:326268"/>
        <dbReference type="EC" id="2.5.1.16"/>
    </reaction>
</comment>
<comment type="pathway">
    <text evidence="1">Amine and polyamine biosynthesis; spermidine biosynthesis; spermidine from putrescine: step 1/1.</text>
</comment>
<comment type="subunit">
    <text evidence="1">Homodimer or homotetramer.</text>
</comment>
<comment type="subcellular location">
    <subcellularLocation>
        <location evidence="1">Cytoplasm</location>
    </subcellularLocation>
</comment>
<comment type="similarity">
    <text evidence="1">Belongs to the spermidine/spermine synthase family.</text>
</comment>
<dbReference type="EC" id="2.5.1.16" evidence="1"/>
<dbReference type="EMBL" id="AE017220">
    <property type="protein sequence ID" value="AAX64072.1"/>
    <property type="molecule type" value="Genomic_DNA"/>
</dbReference>
<dbReference type="RefSeq" id="WP_000829968.1">
    <property type="nucleotide sequence ID" value="NC_006905.1"/>
</dbReference>
<dbReference type="SMR" id="Q57T89"/>
<dbReference type="KEGG" id="sec:SCH_0166"/>
<dbReference type="HOGENOM" id="CLU_048199_0_0_6"/>
<dbReference type="UniPathway" id="UPA00248">
    <property type="reaction ID" value="UER00314"/>
</dbReference>
<dbReference type="Proteomes" id="UP000000538">
    <property type="component" value="Chromosome"/>
</dbReference>
<dbReference type="GO" id="GO:0005829">
    <property type="term" value="C:cytosol"/>
    <property type="evidence" value="ECO:0007669"/>
    <property type="project" value="TreeGrafter"/>
</dbReference>
<dbReference type="GO" id="GO:0004766">
    <property type="term" value="F:spermidine synthase activity"/>
    <property type="evidence" value="ECO:0007669"/>
    <property type="project" value="UniProtKB-UniRule"/>
</dbReference>
<dbReference type="GO" id="GO:0008295">
    <property type="term" value="P:spermidine biosynthetic process"/>
    <property type="evidence" value="ECO:0007669"/>
    <property type="project" value="UniProtKB-UniRule"/>
</dbReference>
<dbReference type="CDD" id="cd02440">
    <property type="entry name" value="AdoMet_MTases"/>
    <property type="match status" value="1"/>
</dbReference>
<dbReference type="FunFam" id="2.30.140.10:FF:000002">
    <property type="entry name" value="Polyamine aminopropyltransferase"/>
    <property type="match status" value="1"/>
</dbReference>
<dbReference type="FunFam" id="3.40.50.150:FF:000026">
    <property type="entry name" value="Polyamine aminopropyltransferase"/>
    <property type="match status" value="1"/>
</dbReference>
<dbReference type="Gene3D" id="2.30.140.10">
    <property type="entry name" value="Spermidine synthase, tetramerisation domain"/>
    <property type="match status" value="1"/>
</dbReference>
<dbReference type="Gene3D" id="3.40.50.150">
    <property type="entry name" value="Vaccinia Virus protein VP39"/>
    <property type="match status" value="1"/>
</dbReference>
<dbReference type="HAMAP" id="MF_00198">
    <property type="entry name" value="Spermidine_synth"/>
    <property type="match status" value="1"/>
</dbReference>
<dbReference type="InterPro" id="IPR030374">
    <property type="entry name" value="PABS"/>
</dbReference>
<dbReference type="InterPro" id="IPR030373">
    <property type="entry name" value="PABS_CS"/>
</dbReference>
<dbReference type="InterPro" id="IPR029063">
    <property type="entry name" value="SAM-dependent_MTases_sf"/>
</dbReference>
<dbReference type="InterPro" id="IPR001045">
    <property type="entry name" value="Spermi_synthase"/>
</dbReference>
<dbReference type="InterPro" id="IPR035246">
    <property type="entry name" value="Spermidine_synt_N"/>
</dbReference>
<dbReference type="InterPro" id="IPR037163">
    <property type="entry name" value="Spermidine_synt_N_sf"/>
</dbReference>
<dbReference type="NCBIfam" id="NF037959">
    <property type="entry name" value="MFS_SpdSyn"/>
    <property type="match status" value="1"/>
</dbReference>
<dbReference type="NCBIfam" id="NF002010">
    <property type="entry name" value="PRK00811.1"/>
    <property type="match status" value="1"/>
</dbReference>
<dbReference type="NCBIfam" id="TIGR00417">
    <property type="entry name" value="speE"/>
    <property type="match status" value="1"/>
</dbReference>
<dbReference type="PANTHER" id="PTHR11558:SF11">
    <property type="entry name" value="SPERMIDINE SYNTHASE"/>
    <property type="match status" value="1"/>
</dbReference>
<dbReference type="PANTHER" id="PTHR11558">
    <property type="entry name" value="SPERMIDINE/SPERMINE SYNTHASE"/>
    <property type="match status" value="1"/>
</dbReference>
<dbReference type="Pfam" id="PF17284">
    <property type="entry name" value="Spermine_synt_N"/>
    <property type="match status" value="1"/>
</dbReference>
<dbReference type="Pfam" id="PF01564">
    <property type="entry name" value="Spermine_synth"/>
    <property type="match status" value="1"/>
</dbReference>
<dbReference type="SUPFAM" id="SSF53335">
    <property type="entry name" value="S-adenosyl-L-methionine-dependent methyltransferases"/>
    <property type="match status" value="1"/>
</dbReference>
<dbReference type="PROSITE" id="PS01330">
    <property type="entry name" value="PABS_1"/>
    <property type="match status" value="1"/>
</dbReference>
<dbReference type="PROSITE" id="PS51006">
    <property type="entry name" value="PABS_2"/>
    <property type="match status" value="1"/>
</dbReference>
<name>SPEE_SALCH</name>
<organism>
    <name type="scientific">Salmonella choleraesuis (strain SC-B67)</name>
    <dbReference type="NCBI Taxonomy" id="321314"/>
    <lineage>
        <taxon>Bacteria</taxon>
        <taxon>Pseudomonadati</taxon>
        <taxon>Pseudomonadota</taxon>
        <taxon>Gammaproteobacteria</taxon>
        <taxon>Enterobacterales</taxon>
        <taxon>Enterobacteriaceae</taxon>
        <taxon>Salmonella</taxon>
    </lineage>
</organism>
<accession>Q57T89</accession>
<feature type="chain" id="PRO_1000012015" description="Polyamine aminopropyltransferase">
    <location>
        <begin position="1"/>
        <end position="286"/>
    </location>
</feature>
<feature type="domain" description="PABS" evidence="1">
    <location>
        <begin position="5"/>
        <end position="238"/>
    </location>
</feature>
<feature type="active site" description="Proton acceptor" evidence="1">
    <location>
        <position position="158"/>
    </location>
</feature>
<feature type="binding site" evidence="1">
    <location>
        <position position="33"/>
    </location>
    <ligand>
        <name>S-methyl-5'-thioadenosine</name>
        <dbReference type="ChEBI" id="CHEBI:17509"/>
    </ligand>
</feature>
<feature type="binding site" evidence="1">
    <location>
        <position position="64"/>
    </location>
    <ligand>
        <name>spermidine</name>
        <dbReference type="ChEBI" id="CHEBI:57834"/>
    </ligand>
</feature>
<feature type="binding site" evidence="1">
    <location>
        <position position="88"/>
    </location>
    <ligand>
        <name>spermidine</name>
        <dbReference type="ChEBI" id="CHEBI:57834"/>
    </ligand>
</feature>
<feature type="binding site" evidence="1">
    <location>
        <position position="108"/>
    </location>
    <ligand>
        <name>S-methyl-5'-thioadenosine</name>
        <dbReference type="ChEBI" id="CHEBI:17509"/>
    </ligand>
</feature>
<feature type="binding site" evidence="1">
    <location>
        <begin position="140"/>
        <end position="141"/>
    </location>
    <ligand>
        <name>S-methyl-5'-thioadenosine</name>
        <dbReference type="ChEBI" id="CHEBI:17509"/>
    </ligand>
</feature>
<feature type="binding site" evidence="1">
    <location>
        <begin position="158"/>
        <end position="161"/>
    </location>
    <ligand>
        <name>spermidine</name>
        <dbReference type="ChEBI" id="CHEBI:57834"/>
    </ligand>
</feature>
<feature type="binding site" evidence="1">
    <location>
        <position position="165"/>
    </location>
    <ligand>
        <name>S-methyl-5'-thioadenosine</name>
        <dbReference type="ChEBI" id="CHEBI:17509"/>
    </ligand>
</feature>
<sequence>MAENTMWHETLHDQFGQYFAVDNVLYHEKTDHQDLIIFENAAFGRVMALDGVVQTTERDEFIYHEMMTHVPLLAHGHAKHVLIIGGGDGAMLREVTRHKNVETITMVEIDAGVVSFCRQYLPNHNAGSYDDPRFTLVIDDGVNFVNQTHQTFDVIISDCTDPIGPGESLFTSAFYEGCKRCLNPGGIFVAQNGVCFLQQDEALDSHRKLSHYFSDVGFYQAAIPTYYGGIMTFAWATDNDALRHLSSEIIQARFHAAGLKCRYYNPAIHAAAFALPQYLHDALSAQ</sequence>
<protein>
    <recommendedName>
        <fullName evidence="1">Polyamine aminopropyltransferase</fullName>
    </recommendedName>
    <alternativeName>
        <fullName evidence="1">Putrescine aminopropyltransferase</fullName>
        <shortName evidence="1">PAPT</shortName>
    </alternativeName>
    <alternativeName>
        <fullName evidence="1">Spermidine synthase</fullName>
        <shortName evidence="1">SPDS</shortName>
        <shortName evidence="1">SPDSY</shortName>
        <ecNumber evidence="1">2.5.1.16</ecNumber>
    </alternativeName>
</protein>
<proteinExistence type="inferred from homology"/>
<evidence type="ECO:0000255" key="1">
    <source>
        <dbReference type="HAMAP-Rule" id="MF_00198"/>
    </source>
</evidence>
<reference key="1">
    <citation type="journal article" date="2005" name="Nucleic Acids Res.">
        <title>The genome sequence of Salmonella enterica serovar Choleraesuis, a highly invasive and resistant zoonotic pathogen.</title>
        <authorList>
            <person name="Chiu C.-H."/>
            <person name="Tang P."/>
            <person name="Chu C."/>
            <person name="Hu S."/>
            <person name="Bao Q."/>
            <person name="Yu J."/>
            <person name="Chou Y.-Y."/>
            <person name="Wang H.-S."/>
            <person name="Lee Y.-S."/>
        </authorList>
    </citation>
    <scope>NUCLEOTIDE SEQUENCE [LARGE SCALE GENOMIC DNA]</scope>
    <source>
        <strain>SC-B67</strain>
    </source>
</reference>